<organism>
    <name type="scientific">Mus musculus</name>
    <name type="common">Mouse</name>
    <dbReference type="NCBI Taxonomy" id="10090"/>
    <lineage>
        <taxon>Eukaryota</taxon>
        <taxon>Metazoa</taxon>
        <taxon>Chordata</taxon>
        <taxon>Craniata</taxon>
        <taxon>Vertebrata</taxon>
        <taxon>Euteleostomi</taxon>
        <taxon>Mammalia</taxon>
        <taxon>Eutheria</taxon>
        <taxon>Euarchontoglires</taxon>
        <taxon>Glires</taxon>
        <taxon>Rodentia</taxon>
        <taxon>Myomorpha</taxon>
        <taxon>Muroidea</taxon>
        <taxon>Muridae</taxon>
        <taxon>Murinae</taxon>
        <taxon>Mus</taxon>
        <taxon>Mus</taxon>
    </lineage>
</organism>
<proteinExistence type="evidence at protein level"/>
<comment type="function">
    <text evidence="1">The phosphorylation status of MCRIP1 functions as a molecular switch to regulate epithelial-mesenchymal transition. Unphosphorylated MCRIP1 binds to and inhibits the transcriptional corepressor CTBP(s). When phosphorylated by MAPK/ERK, MCRIP1 releases CTBP(s) resulting in transcriptional silencing of the E-cadherin gene and induction of epithelial-mesenchymal transition.</text>
</comment>
<comment type="subunit">
    <text evidence="1">Interacts (unphosphorylated form, via the PXDLS motif) with CTBP1, competitively inhibiting CTBP-ZEB1 interaction. Interacts with CTBP2. Interacts with MCRIP2. Interacts with DDX6.</text>
</comment>
<comment type="subcellular location">
    <subcellularLocation>
        <location evidence="1">Nucleus</location>
    </subcellularLocation>
    <subcellularLocation>
        <location evidence="1">Cytoplasm</location>
        <location evidence="1">Stress granule</location>
    </subcellularLocation>
</comment>
<comment type="tissue specificity">
    <text evidence="3">Widely expressed (at protein level).</text>
</comment>
<comment type="PTM">
    <text evidence="1">Phosphorylation by MAPK3/1 (ERK1/2) regulates MCRIP1 binding to CTBP(s).</text>
</comment>
<comment type="similarity">
    <text evidence="4">Belongs to the MCRIP family.</text>
</comment>
<comment type="sequence caution" evidence="4">
    <conflict type="erroneous initiation">
        <sequence resource="EMBL-CDS" id="AAH25536"/>
    </conflict>
    <text>Extended N-terminus.</text>
</comment>
<dbReference type="EMBL" id="AK147780">
    <property type="protein sequence ID" value="BAE28133.1"/>
    <property type="molecule type" value="mRNA"/>
</dbReference>
<dbReference type="EMBL" id="AL669855">
    <property type="status" value="NOT_ANNOTATED_CDS"/>
    <property type="molecule type" value="Genomic_DNA"/>
</dbReference>
<dbReference type="EMBL" id="CH466558">
    <property type="protein sequence ID" value="EDL34763.1"/>
    <property type="molecule type" value="Genomic_DNA"/>
</dbReference>
<dbReference type="EMBL" id="BC025536">
    <property type="protein sequence ID" value="AAH25536.1"/>
    <property type="status" value="ALT_INIT"/>
    <property type="molecule type" value="mRNA"/>
</dbReference>
<dbReference type="CCDS" id="CCDS36391.1"/>
<dbReference type="RefSeq" id="NP_001028403.1">
    <property type="nucleotide sequence ID" value="NM_001033231.4"/>
</dbReference>
<dbReference type="RefSeq" id="NP_001360863.1">
    <property type="nucleotide sequence ID" value="NM_001373934.1"/>
</dbReference>
<dbReference type="SMR" id="Q3UGS4"/>
<dbReference type="BioGRID" id="228660">
    <property type="interactions" value="9"/>
</dbReference>
<dbReference type="FunCoup" id="Q3UGS4">
    <property type="interactions" value="1553"/>
</dbReference>
<dbReference type="STRING" id="10090.ENSMUSP00000034913"/>
<dbReference type="iPTMnet" id="Q3UGS4"/>
<dbReference type="PhosphoSitePlus" id="Q3UGS4"/>
<dbReference type="jPOST" id="Q3UGS4"/>
<dbReference type="PaxDb" id="10090-ENSMUSP00000034913"/>
<dbReference type="PeptideAtlas" id="Q3UGS4"/>
<dbReference type="ProteomicsDB" id="292200"/>
<dbReference type="Pumba" id="Q3UGS4"/>
<dbReference type="Antibodypedia" id="63491">
    <property type="antibodies" value="30 antibodies from 10 providers"/>
</dbReference>
<dbReference type="Ensembl" id="ENSMUST00000034913.5">
    <property type="protein sequence ID" value="ENSMUSP00000034913.5"/>
    <property type="gene ID" value="ENSMUSG00000061111.9"/>
</dbReference>
<dbReference type="GeneID" id="192173"/>
<dbReference type="KEGG" id="mmu:192173"/>
<dbReference type="UCSC" id="uc007mtf.1">
    <property type="organism name" value="mouse"/>
</dbReference>
<dbReference type="AGR" id="MGI:2384752"/>
<dbReference type="CTD" id="348262"/>
<dbReference type="MGI" id="MGI:2384752">
    <property type="gene designation" value="Mcrip1"/>
</dbReference>
<dbReference type="VEuPathDB" id="HostDB:ENSMUSG00000061111"/>
<dbReference type="eggNOG" id="ENOG502S25D">
    <property type="taxonomic scope" value="Eukaryota"/>
</dbReference>
<dbReference type="GeneTree" id="ENSGT00940000161850"/>
<dbReference type="HOGENOM" id="CLU_161057_0_0_1"/>
<dbReference type="InParanoid" id="Q3UGS4"/>
<dbReference type="OMA" id="PQNHERN"/>
<dbReference type="OrthoDB" id="8170061at2759"/>
<dbReference type="PhylomeDB" id="Q3UGS4"/>
<dbReference type="TreeFam" id="TF326620"/>
<dbReference type="BioGRID-ORCS" id="192173">
    <property type="hits" value="2 hits in 76 CRISPR screens"/>
</dbReference>
<dbReference type="ChiTaRS" id="Fam195b">
    <property type="organism name" value="mouse"/>
</dbReference>
<dbReference type="PRO" id="PR:Q3UGS4"/>
<dbReference type="Proteomes" id="UP000000589">
    <property type="component" value="Chromosome 11"/>
</dbReference>
<dbReference type="RNAct" id="Q3UGS4">
    <property type="molecule type" value="protein"/>
</dbReference>
<dbReference type="Bgee" id="ENSMUSG00000061111">
    <property type="expression patterns" value="Expressed in embryonic brain and 254 other cell types or tissues"/>
</dbReference>
<dbReference type="GO" id="GO:0005737">
    <property type="term" value="C:cytoplasm"/>
    <property type="evidence" value="ECO:0000250"/>
    <property type="project" value="UniProtKB"/>
</dbReference>
<dbReference type="GO" id="GO:0010494">
    <property type="term" value="C:cytoplasmic stress granule"/>
    <property type="evidence" value="ECO:0000250"/>
    <property type="project" value="UniProtKB"/>
</dbReference>
<dbReference type="GO" id="GO:0005634">
    <property type="term" value="C:nucleus"/>
    <property type="evidence" value="ECO:0000250"/>
    <property type="project" value="UniProtKB"/>
</dbReference>
<dbReference type="GO" id="GO:0010467">
    <property type="term" value="P:gene expression"/>
    <property type="evidence" value="ECO:0000315"/>
    <property type="project" value="MGI"/>
</dbReference>
<dbReference type="GO" id="GO:0045814">
    <property type="term" value="P:negative regulation of gene expression, epigenetic"/>
    <property type="evidence" value="ECO:0000315"/>
    <property type="project" value="MGI"/>
</dbReference>
<dbReference type="GO" id="GO:0010717">
    <property type="term" value="P:regulation of epithelial to mesenchymal transition"/>
    <property type="evidence" value="ECO:0000250"/>
    <property type="project" value="UniProtKB"/>
</dbReference>
<dbReference type="InterPro" id="IPR029428">
    <property type="entry name" value="MCRIP"/>
</dbReference>
<dbReference type="Pfam" id="PF14799">
    <property type="entry name" value="FAM195"/>
    <property type="match status" value="1"/>
</dbReference>
<evidence type="ECO:0000250" key="1">
    <source>
        <dbReference type="UniProtKB" id="C9JLW8"/>
    </source>
</evidence>
<evidence type="ECO:0000256" key="2">
    <source>
        <dbReference type="SAM" id="MobiDB-lite"/>
    </source>
</evidence>
<evidence type="ECO:0000269" key="3">
    <source>
    </source>
</evidence>
<evidence type="ECO:0000305" key="4"/>
<evidence type="ECO:0007744" key="5">
    <source>
    </source>
</evidence>
<evidence type="ECO:0007744" key="6">
    <source>
    </source>
</evidence>
<name>MCRI1_MOUSE</name>
<feature type="chain" id="PRO_0000393955" description="Mapk-regulated corepressor-interacting protein 1">
    <location>
        <begin position="1"/>
        <end position="97"/>
    </location>
</feature>
<feature type="region of interest" description="Disordered" evidence="2">
    <location>
        <begin position="1"/>
        <end position="29"/>
    </location>
</feature>
<feature type="short sequence motif" description="PXDLS motif" evidence="4">
    <location>
        <begin position="80"/>
        <end position="84"/>
    </location>
</feature>
<feature type="compositionally biased region" description="Low complexity" evidence="2">
    <location>
        <begin position="15"/>
        <end position="26"/>
    </location>
</feature>
<feature type="modified residue" description="Phosphoserine" evidence="6">
    <location>
        <position position="21"/>
    </location>
</feature>
<feature type="modified residue" description="Phosphothreonine" evidence="1">
    <location>
        <position position="30"/>
    </location>
</feature>
<feature type="modified residue" description="Phosphotyrosine" evidence="5">
    <location>
        <position position="41"/>
    </location>
</feature>
<feature type="modified residue" description="N6-acetyllysine" evidence="1">
    <location>
        <position position="79"/>
    </location>
</feature>
<keyword id="KW-0007">Acetylation</keyword>
<keyword id="KW-0963">Cytoplasm</keyword>
<keyword id="KW-0539">Nucleus</keyword>
<keyword id="KW-0597">Phosphoprotein</keyword>
<keyword id="KW-1185">Reference proteome</keyword>
<gene>
    <name type="primary">Mcrip1</name>
    <name type="synonym">Fam195b</name>
</gene>
<accession>Q3UGS4</accession>
<accession>Q8QZS4</accession>
<sequence>MTSSPVSRVVYNGKRNSSPRSPTNSSEIFTPAHEENVRFIYEAWQGVERDLRSQLSSGERCLVEEYVEKVPNPSLKTFKPIDLSDLKRRNTQDAKKS</sequence>
<reference key="1">
    <citation type="journal article" date="2005" name="Science">
        <title>The transcriptional landscape of the mammalian genome.</title>
        <authorList>
            <person name="Carninci P."/>
            <person name="Kasukawa T."/>
            <person name="Katayama S."/>
            <person name="Gough J."/>
            <person name="Frith M.C."/>
            <person name="Maeda N."/>
            <person name="Oyama R."/>
            <person name="Ravasi T."/>
            <person name="Lenhard B."/>
            <person name="Wells C."/>
            <person name="Kodzius R."/>
            <person name="Shimokawa K."/>
            <person name="Bajic V.B."/>
            <person name="Brenner S.E."/>
            <person name="Batalov S."/>
            <person name="Forrest A.R."/>
            <person name="Zavolan M."/>
            <person name="Davis M.J."/>
            <person name="Wilming L.G."/>
            <person name="Aidinis V."/>
            <person name="Allen J.E."/>
            <person name="Ambesi-Impiombato A."/>
            <person name="Apweiler R."/>
            <person name="Aturaliya R.N."/>
            <person name="Bailey T.L."/>
            <person name="Bansal M."/>
            <person name="Baxter L."/>
            <person name="Beisel K.W."/>
            <person name="Bersano T."/>
            <person name="Bono H."/>
            <person name="Chalk A.M."/>
            <person name="Chiu K.P."/>
            <person name="Choudhary V."/>
            <person name="Christoffels A."/>
            <person name="Clutterbuck D.R."/>
            <person name="Crowe M.L."/>
            <person name="Dalla E."/>
            <person name="Dalrymple B.P."/>
            <person name="de Bono B."/>
            <person name="Della Gatta G."/>
            <person name="di Bernardo D."/>
            <person name="Down T."/>
            <person name="Engstrom P."/>
            <person name="Fagiolini M."/>
            <person name="Faulkner G."/>
            <person name="Fletcher C.F."/>
            <person name="Fukushima T."/>
            <person name="Furuno M."/>
            <person name="Futaki S."/>
            <person name="Gariboldi M."/>
            <person name="Georgii-Hemming P."/>
            <person name="Gingeras T.R."/>
            <person name="Gojobori T."/>
            <person name="Green R.E."/>
            <person name="Gustincich S."/>
            <person name="Harbers M."/>
            <person name="Hayashi Y."/>
            <person name="Hensch T.K."/>
            <person name="Hirokawa N."/>
            <person name="Hill D."/>
            <person name="Huminiecki L."/>
            <person name="Iacono M."/>
            <person name="Ikeo K."/>
            <person name="Iwama A."/>
            <person name="Ishikawa T."/>
            <person name="Jakt M."/>
            <person name="Kanapin A."/>
            <person name="Katoh M."/>
            <person name="Kawasawa Y."/>
            <person name="Kelso J."/>
            <person name="Kitamura H."/>
            <person name="Kitano H."/>
            <person name="Kollias G."/>
            <person name="Krishnan S.P."/>
            <person name="Kruger A."/>
            <person name="Kummerfeld S.K."/>
            <person name="Kurochkin I.V."/>
            <person name="Lareau L.F."/>
            <person name="Lazarevic D."/>
            <person name="Lipovich L."/>
            <person name="Liu J."/>
            <person name="Liuni S."/>
            <person name="McWilliam S."/>
            <person name="Madan Babu M."/>
            <person name="Madera M."/>
            <person name="Marchionni L."/>
            <person name="Matsuda H."/>
            <person name="Matsuzawa S."/>
            <person name="Miki H."/>
            <person name="Mignone F."/>
            <person name="Miyake S."/>
            <person name="Morris K."/>
            <person name="Mottagui-Tabar S."/>
            <person name="Mulder N."/>
            <person name="Nakano N."/>
            <person name="Nakauchi H."/>
            <person name="Ng P."/>
            <person name="Nilsson R."/>
            <person name="Nishiguchi S."/>
            <person name="Nishikawa S."/>
            <person name="Nori F."/>
            <person name="Ohara O."/>
            <person name="Okazaki Y."/>
            <person name="Orlando V."/>
            <person name="Pang K.C."/>
            <person name="Pavan W.J."/>
            <person name="Pavesi G."/>
            <person name="Pesole G."/>
            <person name="Petrovsky N."/>
            <person name="Piazza S."/>
            <person name="Reed J."/>
            <person name="Reid J.F."/>
            <person name="Ring B.Z."/>
            <person name="Ringwald M."/>
            <person name="Rost B."/>
            <person name="Ruan Y."/>
            <person name="Salzberg S.L."/>
            <person name="Sandelin A."/>
            <person name="Schneider C."/>
            <person name="Schoenbach C."/>
            <person name="Sekiguchi K."/>
            <person name="Semple C.A."/>
            <person name="Seno S."/>
            <person name="Sessa L."/>
            <person name="Sheng Y."/>
            <person name="Shibata Y."/>
            <person name="Shimada H."/>
            <person name="Shimada K."/>
            <person name="Silva D."/>
            <person name="Sinclair B."/>
            <person name="Sperling S."/>
            <person name="Stupka E."/>
            <person name="Sugiura K."/>
            <person name="Sultana R."/>
            <person name="Takenaka Y."/>
            <person name="Taki K."/>
            <person name="Tammoja K."/>
            <person name="Tan S.L."/>
            <person name="Tang S."/>
            <person name="Taylor M.S."/>
            <person name="Tegner J."/>
            <person name="Teichmann S.A."/>
            <person name="Ueda H.R."/>
            <person name="van Nimwegen E."/>
            <person name="Verardo R."/>
            <person name="Wei C.L."/>
            <person name="Yagi K."/>
            <person name="Yamanishi H."/>
            <person name="Zabarovsky E."/>
            <person name="Zhu S."/>
            <person name="Zimmer A."/>
            <person name="Hide W."/>
            <person name="Bult C."/>
            <person name="Grimmond S.M."/>
            <person name="Teasdale R.D."/>
            <person name="Liu E.T."/>
            <person name="Brusic V."/>
            <person name="Quackenbush J."/>
            <person name="Wahlestedt C."/>
            <person name="Mattick J.S."/>
            <person name="Hume D.A."/>
            <person name="Kai C."/>
            <person name="Sasaki D."/>
            <person name="Tomaru Y."/>
            <person name="Fukuda S."/>
            <person name="Kanamori-Katayama M."/>
            <person name="Suzuki M."/>
            <person name="Aoki J."/>
            <person name="Arakawa T."/>
            <person name="Iida J."/>
            <person name="Imamura K."/>
            <person name="Itoh M."/>
            <person name="Kato T."/>
            <person name="Kawaji H."/>
            <person name="Kawagashira N."/>
            <person name="Kawashima T."/>
            <person name="Kojima M."/>
            <person name="Kondo S."/>
            <person name="Konno H."/>
            <person name="Nakano K."/>
            <person name="Ninomiya N."/>
            <person name="Nishio T."/>
            <person name="Okada M."/>
            <person name="Plessy C."/>
            <person name="Shibata K."/>
            <person name="Shiraki T."/>
            <person name="Suzuki S."/>
            <person name="Tagami M."/>
            <person name="Waki K."/>
            <person name="Watahiki A."/>
            <person name="Okamura-Oho Y."/>
            <person name="Suzuki H."/>
            <person name="Kawai J."/>
            <person name="Hayashizaki Y."/>
        </authorList>
    </citation>
    <scope>NUCLEOTIDE SEQUENCE [LARGE SCALE MRNA]</scope>
    <source>
        <strain>C57BL/6J</strain>
    </source>
</reference>
<reference key="2">
    <citation type="journal article" date="2009" name="PLoS Biol.">
        <title>Lineage-specific biology revealed by a finished genome assembly of the mouse.</title>
        <authorList>
            <person name="Church D.M."/>
            <person name="Goodstadt L."/>
            <person name="Hillier L.W."/>
            <person name="Zody M.C."/>
            <person name="Goldstein S."/>
            <person name="She X."/>
            <person name="Bult C.J."/>
            <person name="Agarwala R."/>
            <person name="Cherry J.L."/>
            <person name="DiCuccio M."/>
            <person name="Hlavina W."/>
            <person name="Kapustin Y."/>
            <person name="Meric P."/>
            <person name="Maglott D."/>
            <person name="Birtle Z."/>
            <person name="Marques A.C."/>
            <person name="Graves T."/>
            <person name="Zhou S."/>
            <person name="Teague B."/>
            <person name="Potamousis K."/>
            <person name="Churas C."/>
            <person name="Place M."/>
            <person name="Herschleb J."/>
            <person name="Runnheim R."/>
            <person name="Forrest D."/>
            <person name="Amos-Landgraf J."/>
            <person name="Schwartz D.C."/>
            <person name="Cheng Z."/>
            <person name="Lindblad-Toh K."/>
            <person name="Eichler E.E."/>
            <person name="Ponting C.P."/>
        </authorList>
    </citation>
    <scope>NUCLEOTIDE SEQUENCE [LARGE SCALE GENOMIC DNA]</scope>
    <source>
        <strain>C57BL/6J</strain>
    </source>
</reference>
<reference key="3">
    <citation type="submission" date="2005-07" db="EMBL/GenBank/DDBJ databases">
        <authorList>
            <person name="Mural R.J."/>
            <person name="Adams M.D."/>
            <person name="Myers E.W."/>
            <person name="Smith H.O."/>
            <person name="Venter J.C."/>
        </authorList>
    </citation>
    <scope>NUCLEOTIDE SEQUENCE [LARGE SCALE GENOMIC DNA]</scope>
</reference>
<reference key="4">
    <citation type="journal article" date="2004" name="Genome Res.">
        <title>The status, quality, and expansion of the NIH full-length cDNA project: the Mammalian Gene Collection (MGC).</title>
        <authorList>
            <consortium name="The MGC Project Team"/>
        </authorList>
    </citation>
    <scope>NUCLEOTIDE SEQUENCE [LARGE SCALE MRNA]</scope>
    <source>
        <tissue>Mammary tumor</tissue>
    </source>
</reference>
<reference key="5">
    <citation type="journal article" date="2007" name="J. Immunol.">
        <title>Quantitative time-resolved phosphoproteomic analysis of mast cell signaling.</title>
        <authorList>
            <person name="Cao L."/>
            <person name="Yu K."/>
            <person name="Banh C."/>
            <person name="Nguyen V."/>
            <person name="Ritz A."/>
            <person name="Raphael B.J."/>
            <person name="Kawakami Y."/>
            <person name="Kawakami T."/>
            <person name="Salomon A.R."/>
        </authorList>
    </citation>
    <scope>PHOSPHORYLATION [LARGE SCALE ANALYSIS] AT TYR-41</scope>
    <scope>IDENTIFICATION BY MASS SPECTROMETRY [LARGE SCALE ANALYSIS]</scope>
    <source>
        <tissue>Mast cell</tissue>
    </source>
</reference>
<reference key="6">
    <citation type="journal article" date="2007" name="Proc. Natl. Acad. Sci. U.S.A.">
        <title>Large-scale phosphorylation analysis of mouse liver.</title>
        <authorList>
            <person name="Villen J."/>
            <person name="Beausoleil S.A."/>
            <person name="Gerber S.A."/>
            <person name="Gygi S.P."/>
        </authorList>
    </citation>
    <scope>IDENTIFICATION BY MASS SPECTROMETRY [LARGE SCALE ANALYSIS]</scope>
    <source>
        <tissue>Liver</tissue>
    </source>
</reference>
<reference key="7">
    <citation type="journal article" date="2009" name="Immunity">
        <title>The phagosomal proteome in interferon-gamma-activated macrophages.</title>
        <authorList>
            <person name="Trost M."/>
            <person name="English L."/>
            <person name="Lemieux S."/>
            <person name="Courcelles M."/>
            <person name="Desjardins M."/>
            <person name="Thibault P."/>
        </authorList>
    </citation>
    <scope>IDENTIFICATION BY MASS SPECTROMETRY [LARGE SCALE ANALYSIS]</scope>
</reference>
<reference key="8">
    <citation type="journal article" date="2010" name="Cell">
        <title>A tissue-specific atlas of mouse protein phosphorylation and expression.</title>
        <authorList>
            <person name="Huttlin E.L."/>
            <person name="Jedrychowski M.P."/>
            <person name="Elias J.E."/>
            <person name="Goswami T."/>
            <person name="Rad R."/>
            <person name="Beausoleil S.A."/>
            <person name="Villen J."/>
            <person name="Haas W."/>
            <person name="Sowa M.E."/>
            <person name="Gygi S.P."/>
        </authorList>
    </citation>
    <scope>PHOSPHORYLATION [LARGE SCALE ANALYSIS] AT SER-21</scope>
    <scope>IDENTIFICATION BY MASS SPECTROMETRY [LARGE SCALE ANALYSIS]</scope>
    <source>
        <tissue>Brain</tissue>
        <tissue>Heart</tissue>
        <tissue>Kidney</tissue>
        <tissue>Lung</tissue>
        <tissue>Spleen</tissue>
        <tissue>Testis</tissue>
    </source>
</reference>
<reference key="9">
    <citation type="journal article" date="2015" name="Mol. Cell">
        <title>MCRIP1, an ERK substrate, mediates ERK-induced gene silencing during epithelial-mesenchymal transition by regulating the co-repressor CtBP.</title>
        <authorList>
            <person name="Ichikawa K."/>
            <person name="Kubota Y."/>
            <person name="Nakamura T."/>
            <person name="Weng J.S."/>
            <person name="Tomida T."/>
            <person name="Saito H."/>
            <person name="Takekawa M."/>
        </authorList>
    </citation>
    <scope>TISSUE SPECIFICITY</scope>
</reference>
<protein>
    <recommendedName>
        <fullName>Mapk-regulated corepressor-interacting protein 1</fullName>
    </recommendedName>
    <alternativeName>
        <fullName>Protein FAM195B</fullName>
    </alternativeName>
</protein>